<accession>A0A8K1Y6D9</accession>
<name>PHOM1_DIALO</name>
<gene>
    <name evidence="3" type="primary">phomM</name>
</gene>
<keyword id="KW-0489">Methyltransferase</keyword>
<keyword id="KW-0949">S-adenosyl-L-methionine</keyword>
<keyword id="KW-0808">Transferase</keyword>
<proteinExistence type="inferred from homology"/>
<comment type="function">
    <text evidence="2 5">Methyltransferase; part of the gene cluster that mediates the biosynthesis of the phomopsins, a group of hexapeptide mycotoxins which infects lupins and causes lupinosis disease in livestock (PubMed:34608734). Within the pathway, phomM acts as an S-adenosylmethionine-dependent alpha-N-methyltransferase that catalyzes two successive N-methylation reactions, converting N-desmethyl-phomopsin A to phomopsin A and phomopsin A further to an N,N-dimethylated congener called phomopsin E (PubMed:34608734). The pathway starts with the processing of the precursor phomA by several endopeptidases including kexin proteases as well as the cluster-specific S41 family peptidase phomP1 and the oligopeptidase phomG to produce 10 identical copies of the hexapeptide Tyr-Val-Ile-Pro-Ile-Asp. After being excised from the precursor peptide, the core peptides are cyclized and modified post-translationally by enzymes encoded within the gene cluster. The timing and order of proteolysis of the phomA precursor and PTMs are still unknown. Two tyrosinase-like enzymes, phomQ1 and phomQ2, catalyze the chlorination and hydroxylation of Tyr, respectively. PhomYb, is proposed to be involved in the construction of the macrocyclic structure. The other 4 ustYa family proteins may be involved in PTMs that generate the unique structure of phomopsin A. PhomYa is required for the hydroxylation of C-beta of Tyr. PhomYc, phomYd, and phomYe are responsible for the biosynthesis of 2,3-dehydroisoleucine (dIle), 2,3-dehydroaspartic acid (dAsp), and 3,4-dehydroproline (dPro), respectively. While dIle formation by phomYc is indispensable for the installation of dAsp by phomYd, the order of the other PTMs have not been elucidated yet. Most of the biosynthetic enzymes likely have broad substrate specificity, and thus, there might be a metabolic grid from a precursor to phomopsin A. The enzyme(s) responsible for the biosynthesis of 3,4-dehydrovaline (dVal) have also not been identified yet. Finally, phomM acts as an S-adenosylmethionine-dependent alpha-N-methyltransferase that catalyzes two successive N-methylation reactions, converting N-desmethyl-phomopsin A to phomopsin A and phomopsin A further to an N,N-dimethylated congener called phomopsin E (Probable).</text>
</comment>
<comment type="pathway">
    <text evidence="2">Mycotoxin biosynthesis.</text>
</comment>
<comment type="disruption phenotype">
    <text evidence="2">Does not produce N-methylated compounds phomopsin A and N,N-dimethyl phomopsin A, but accumulates N-desmethyl phomopsin A.</text>
</comment>
<comment type="similarity">
    <text evidence="4">Belongs to the class I-like SAM-binding methyltransferase superfamily. Erg6/SMT family.</text>
</comment>
<sequence length="387" mass="41646">MASVTITSVHEPTNPLAVAHTGEREVEGDQLIKTDTNNDNDIINTLLNNFLYPQELKHNVFVPRFQQRITIVKAWDILSLSTSPPNGTNGANGTNSAPHRPKDLHILDIGCGQGESAVTMAALLQPHMHGARLHITGIDTARPDYGTPYTVAETHAHLTASALGRHISFRREDAAAFFSPSRLSSPSPPGSWPSAANVDAVTLCHSLWYFPTPQSVADLFTTLAGARVPRVYLAEYSFRGSLPGGQQDAHILAARAQALLHASVLEKLSADSSQQNHQGREPRPRAPNVRAALDVGSIVEAAAAAGWAVRRQGTFVPAADMIEGHLEARLVVKDAFAEAVRAEGLSPEREHEVLGLVPGVKKAFARLAAAGVAKGRAMDVWWAELER</sequence>
<protein>
    <recommendedName>
        <fullName evidence="3">Methyltransferase phomM</fullName>
        <ecNumber evidence="2">2.1.1.-</ecNumber>
    </recommendedName>
    <alternativeName>
        <fullName evidence="3">Phomopsin biosynthesis cluster protein M</fullName>
    </alternativeName>
</protein>
<feature type="chain" id="PRO_0000458346" description="Methyltransferase phomM">
    <location>
        <begin position="1"/>
        <end position="387"/>
    </location>
</feature>
<feature type="region of interest" description="Methyltransferase domain" evidence="1">
    <location>
        <begin position="98"/>
        <end position="223"/>
    </location>
</feature>
<evidence type="ECO:0000255" key="1"/>
<evidence type="ECO:0000269" key="2">
    <source>
    </source>
</evidence>
<evidence type="ECO:0000303" key="3">
    <source>
    </source>
</evidence>
<evidence type="ECO:0000305" key="4"/>
<evidence type="ECO:0000305" key="5">
    <source>
    </source>
</evidence>
<reference key="1">
    <citation type="journal article" date="2021" name="Angew. Chem. Int. Ed.">
        <title>Biosynthetic studies of phomopsins unveil posttranslational installation of dehydroamino acids by ustYa family proteins.</title>
        <authorList>
            <person name="Sogahata K."/>
            <person name="Ozaki T."/>
            <person name="Igarashi Y."/>
            <person name="Naganuma Y."/>
            <person name="Liu C."/>
            <person name="Minami A."/>
            <person name="Oikawa H."/>
        </authorList>
    </citation>
    <scope>NUCLEOTIDE SEQUENCE [GENOMIC DNA]</scope>
    <scope>FUNCTION</scope>
    <scope>DISRUPTION PHENOTYPE</scope>
    <scope>PATHWAY</scope>
    <source>
        <strain>ATCC 26115 / IMI 115107 / C 1557</strain>
    </source>
</reference>
<dbReference type="EC" id="2.1.1.-" evidence="2"/>
<dbReference type="EMBL" id="LC646903">
    <property type="protein sequence ID" value="BDA39145.1"/>
    <property type="molecule type" value="Genomic_DNA"/>
</dbReference>
<dbReference type="SMR" id="A0A8K1Y6D9"/>
<dbReference type="GO" id="GO:0008168">
    <property type="term" value="F:methyltransferase activity"/>
    <property type="evidence" value="ECO:0007669"/>
    <property type="project" value="UniProtKB-KW"/>
</dbReference>
<dbReference type="GO" id="GO:0032259">
    <property type="term" value="P:methylation"/>
    <property type="evidence" value="ECO:0007669"/>
    <property type="project" value="UniProtKB-KW"/>
</dbReference>
<dbReference type="Gene3D" id="3.40.50.150">
    <property type="entry name" value="Vaccinia Virus protein VP39"/>
    <property type="match status" value="1"/>
</dbReference>
<dbReference type="InterPro" id="IPR029063">
    <property type="entry name" value="SAM-dependent_MTases_sf"/>
</dbReference>
<dbReference type="SUPFAM" id="SSF53335">
    <property type="entry name" value="S-adenosyl-L-methionine-dependent methyltransferases"/>
    <property type="match status" value="1"/>
</dbReference>
<organism>
    <name type="scientific">Diaporthe leptostromiformis</name>
    <name type="common">Lupinosis disease fungus</name>
    <name type="synonym">Phomopsis leptostromiformis</name>
    <dbReference type="NCBI Taxonomy" id="291059"/>
    <lineage>
        <taxon>Eukaryota</taxon>
        <taxon>Fungi</taxon>
        <taxon>Dikarya</taxon>
        <taxon>Ascomycota</taxon>
        <taxon>Pezizomycotina</taxon>
        <taxon>Sordariomycetes</taxon>
        <taxon>Sordariomycetidae</taxon>
        <taxon>Diaporthales</taxon>
        <taxon>Diaporthaceae</taxon>
        <taxon>Diaporthe</taxon>
    </lineage>
</organism>